<comment type="function">
    <text evidence="1">Catalyzes the hydrolysis of various purine and pyrimidine 5'-nucleotides, showing preference for 5'-nucleoside monophosphates and exhibiting the highest catalytic activity toward 5'-XMP (PubMed:27907199). Also shows a relatively high phosphohydrolase activity toward the nucleotide precursors ribose-5-phosphate (R5P) and 5-phosphoribosyl-1-pyrophosphate (PRPP), and toward the non-natural substrate p-nitrophenyl phosphate (pNPP) (PubMed:27907199).</text>
</comment>
<comment type="catalytic activity">
    <reaction evidence="1">
        <text>a ribonucleoside 5'-phosphate + H2O = a ribonucleoside + phosphate</text>
        <dbReference type="Rhea" id="RHEA:12484"/>
        <dbReference type="ChEBI" id="CHEBI:15377"/>
        <dbReference type="ChEBI" id="CHEBI:18254"/>
        <dbReference type="ChEBI" id="CHEBI:43474"/>
        <dbReference type="ChEBI" id="CHEBI:58043"/>
        <dbReference type="EC" id="3.1.3.5"/>
    </reaction>
</comment>
<comment type="catalytic activity">
    <reaction evidence="1">
        <text>XMP + H2O = xanthosine + phosphate</text>
        <dbReference type="Rhea" id="RHEA:28530"/>
        <dbReference type="ChEBI" id="CHEBI:15377"/>
        <dbReference type="ChEBI" id="CHEBI:18107"/>
        <dbReference type="ChEBI" id="CHEBI:43474"/>
        <dbReference type="ChEBI" id="CHEBI:57464"/>
    </reaction>
</comment>
<comment type="cofactor">
    <cofactor evidence="1">
        <name>Mg(2+)</name>
        <dbReference type="ChEBI" id="CHEBI:18420"/>
    </cofactor>
</comment>
<comment type="biophysicochemical properties">
    <kinetics>
        <KM evidence="1">1.64 mM for pNPP</KM>
        <KM evidence="1">1.53 mM for 5'-XMP</KM>
        <KM evidence="1">1.27 mM for PRPP</KM>
        <KM evidence="1">24 mM for R5P</KM>
        <KM evidence="1">6.65 mM for 5'-GMP</KM>
        <text evidence="1">kcat is 61.0 sec(-1) with pNPP as substrate. kcat is 0.31 sec(-1) with 5'-XMP as substrate. kcat is 0.17 sec(-1) with PRPP as substrate. kcat is 1.84 sec(-1) with R5P as substrate. kcat is 0.06 sec(-1) with 5'-GMP as substrate.</text>
    </kinetics>
</comment>
<comment type="subunit">
    <text evidence="1">Homodimer.</text>
</comment>
<comment type="subcellular location">
    <subcellularLocation>
        <location evidence="3">Cytoplasm</location>
    </subcellularLocation>
</comment>
<comment type="induction">
    <text evidence="1">Cotranscribed with the two upstream genes, yutD and yutE. YutF overproduction increases the level of yutDEF operon expression, and this up-regulation is enhanced in the presence of inorganic phosphate.</text>
</comment>
<comment type="disruption phenotype">
    <text evidence="1">Inactivation of the gene has essentially no effect on cell growth in rich or minimal medium but results in a drop in pNPP hydrolysis in the crude extracts of B.subtilis cells to undetectable levels.</text>
</comment>
<comment type="similarity">
    <text evidence="2">Belongs to the HAD-like hydrolase superfamily. NagD family.</text>
</comment>
<reference key="1">
    <citation type="journal article" date="1997" name="Nature">
        <title>The complete genome sequence of the Gram-positive bacterium Bacillus subtilis.</title>
        <authorList>
            <person name="Kunst F."/>
            <person name="Ogasawara N."/>
            <person name="Moszer I."/>
            <person name="Albertini A.M."/>
            <person name="Alloni G."/>
            <person name="Azevedo V."/>
            <person name="Bertero M.G."/>
            <person name="Bessieres P."/>
            <person name="Bolotin A."/>
            <person name="Borchert S."/>
            <person name="Borriss R."/>
            <person name="Boursier L."/>
            <person name="Brans A."/>
            <person name="Braun M."/>
            <person name="Brignell S.C."/>
            <person name="Bron S."/>
            <person name="Brouillet S."/>
            <person name="Bruschi C.V."/>
            <person name="Caldwell B."/>
            <person name="Capuano V."/>
            <person name="Carter N.M."/>
            <person name="Choi S.-K."/>
            <person name="Codani J.-J."/>
            <person name="Connerton I.F."/>
            <person name="Cummings N.J."/>
            <person name="Daniel R.A."/>
            <person name="Denizot F."/>
            <person name="Devine K.M."/>
            <person name="Duesterhoeft A."/>
            <person name="Ehrlich S.D."/>
            <person name="Emmerson P.T."/>
            <person name="Entian K.-D."/>
            <person name="Errington J."/>
            <person name="Fabret C."/>
            <person name="Ferrari E."/>
            <person name="Foulger D."/>
            <person name="Fritz C."/>
            <person name="Fujita M."/>
            <person name="Fujita Y."/>
            <person name="Fuma S."/>
            <person name="Galizzi A."/>
            <person name="Galleron N."/>
            <person name="Ghim S.-Y."/>
            <person name="Glaser P."/>
            <person name="Goffeau A."/>
            <person name="Golightly E.J."/>
            <person name="Grandi G."/>
            <person name="Guiseppi G."/>
            <person name="Guy B.J."/>
            <person name="Haga K."/>
            <person name="Haiech J."/>
            <person name="Harwood C.R."/>
            <person name="Henaut A."/>
            <person name="Hilbert H."/>
            <person name="Holsappel S."/>
            <person name="Hosono S."/>
            <person name="Hullo M.-F."/>
            <person name="Itaya M."/>
            <person name="Jones L.-M."/>
            <person name="Joris B."/>
            <person name="Karamata D."/>
            <person name="Kasahara Y."/>
            <person name="Klaerr-Blanchard M."/>
            <person name="Klein C."/>
            <person name="Kobayashi Y."/>
            <person name="Koetter P."/>
            <person name="Koningstein G."/>
            <person name="Krogh S."/>
            <person name="Kumano M."/>
            <person name="Kurita K."/>
            <person name="Lapidus A."/>
            <person name="Lardinois S."/>
            <person name="Lauber J."/>
            <person name="Lazarevic V."/>
            <person name="Lee S.-M."/>
            <person name="Levine A."/>
            <person name="Liu H."/>
            <person name="Masuda S."/>
            <person name="Mauel C."/>
            <person name="Medigue C."/>
            <person name="Medina N."/>
            <person name="Mellado R.P."/>
            <person name="Mizuno M."/>
            <person name="Moestl D."/>
            <person name="Nakai S."/>
            <person name="Noback M."/>
            <person name="Noone D."/>
            <person name="O'Reilly M."/>
            <person name="Ogawa K."/>
            <person name="Ogiwara A."/>
            <person name="Oudega B."/>
            <person name="Park S.-H."/>
            <person name="Parro V."/>
            <person name="Pohl T.M."/>
            <person name="Portetelle D."/>
            <person name="Porwollik S."/>
            <person name="Prescott A.M."/>
            <person name="Presecan E."/>
            <person name="Pujic P."/>
            <person name="Purnelle B."/>
            <person name="Rapoport G."/>
            <person name="Rey M."/>
            <person name="Reynolds S."/>
            <person name="Rieger M."/>
            <person name="Rivolta C."/>
            <person name="Rocha E."/>
            <person name="Roche B."/>
            <person name="Rose M."/>
            <person name="Sadaie Y."/>
            <person name="Sato T."/>
            <person name="Scanlan E."/>
            <person name="Schleich S."/>
            <person name="Schroeter R."/>
            <person name="Scoffone F."/>
            <person name="Sekiguchi J."/>
            <person name="Sekowska A."/>
            <person name="Seror S.J."/>
            <person name="Serror P."/>
            <person name="Shin B.-S."/>
            <person name="Soldo B."/>
            <person name="Sorokin A."/>
            <person name="Tacconi E."/>
            <person name="Takagi T."/>
            <person name="Takahashi H."/>
            <person name="Takemaru K."/>
            <person name="Takeuchi M."/>
            <person name="Tamakoshi A."/>
            <person name="Tanaka T."/>
            <person name="Terpstra P."/>
            <person name="Tognoni A."/>
            <person name="Tosato V."/>
            <person name="Uchiyama S."/>
            <person name="Vandenbol M."/>
            <person name="Vannier F."/>
            <person name="Vassarotti A."/>
            <person name="Viari A."/>
            <person name="Wambutt R."/>
            <person name="Wedler E."/>
            <person name="Wedler H."/>
            <person name="Weitzenegger T."/>
            <person name="Winters P."/>
            <person name="Wipat A."/>
            <person name="Yamamoto H."/>
            <person name="Yamane K."/>
            <person name="Yasumoto K."/>
            <person name="Yata K."/>
            <person name="Yoshida K."/>
            <person name="Yoshikawa H.-F."/>
            <person name="Zumstein E."/>
            <person name="Yoshikawa H."/>
            <person name="Danchin A."/>
        </authorList>
    </citation>
    <scope>NUCLEOTIDE SEQUENCE [LARGE SCALE GENOMIC DNA]</scope>
    <source>
        <strain>168</strain>
    </source>
</reference>
<reference key="2">
    <citation type="journal article" date="2016" name="PLoS ONE">
        <title>Identification, heterologous expression, and functional characterization of Bacillus subtilis YutF, a HAD superfamily 5'-nucleotidase with broad substrate specificity.</title>
        <authorList>
            <person name="Zakataeva N.P."/>
            <person name="Romanenkov D.V."/>
            <person name="Yusupova Y.R."/>
            <person name="Skripnikova V.S."/>
            <person name="Asahara T."/>
            <person name="Gronskiy S.V."/>
        </authorList>
    </citation>
    <scope>FUNCTION</scope>
    <scope>CATALYTIC ACTIVITY</scope>
    <scope>COFACTOR</scope>
    <scope>BIOPHYSICOCHEMICAL PROPERTIES</scope>
    <scope>SUBUNIT</scope>
    <scope>INDUCTION</scope>
    <scope>DISRUPTION PHENOTYPE</scope>
    <source>
        <strain>168</strain>
    </source>
</reference>
<reference evidence="4" key="3">
    <citation type="submission" date="2010-10" db="PDB data bank">
        <title>Crystal structure of putative p-nitrophenyl phosphatase from Bacillus subtilis.</title>
        <authorList>
            <person name="Fedorov A.A."/>
            <person name="Fedorov E.V."/>
            <person name="Toro R."/>
            <person name="Sauder J.M."/>
            <person name="Burley S.K."/>
            <person name="Almo S.C."/>
        </authorList>
    </citation>
    <scope>X-RAY CRYSTALLOGRAPHY (1.60 ANGSTROMS) OF 2-256</scope>
</reference>
<gene>
    <name type="primary">yutF</name>
    <name type="ordered locus">BSU32290</name>
</gene>
<sequence>MKTYKGYLIDLDGTMYNGTEKIEEACEFVRTLKDRGVPYLFVTNNSSRTPKQVADKLVSFDIPATEEQVFTTSMATAQHIAQQKKDASVYVIGEEGIRQAIEENGLTFGGENADFVVVGIDRSITYEKFAVGCLAIRNGARFISTNGDIAIPTERGLLPGNGSLTSVLTVSTGVQPVFIGKPESIIMEQAMRVLGTDVSETLMVGDNYATDIMAGINAGMDTLLVHTGVTKREHMTDDMEKPTHAIDSLTEWIPYI</sequence>
<keyword id="KW-0002">3D-structure</keyword>
<keyword id="KW-0963">Cytoplasm</keyword>
<keyword id="KW-0378">Hydrolase</keyword>
<keyword id="KW-0460">Magnesium</keyword>
<keyword id="KW-0479">Metal-binding</keyword>
<keyword id="KW-1185">Reference proteome</keyword>
<organism>
    <name type="scientific">Bacillus subtilis (strain 168)</name>
    <dbReference type="NCBI Taxonomy" id="224308"/>
    <lineage>
        <taxon>Bacteria</taxon>
        <taxon>Bacillati</taxon>
        <taxon>Bacillota</taxon>
        <taxon>Bacilli</taxon>
        <taxon>Bacillales</taxon>
        <taxon>Bacillaceae</taxon>
        <taxon>Bacillus</taxon>
    </lineage>
</organism>
<evidence type="ECO:0000269" key="1">
    <source>
    </source>
</evidence>
<evidence type="ECO:0000305" key="2"/>
<evidence type="ECO:0000305" key="3">
    <source>
    </source>
</evidence>
<evidence type="ECO:0007744" key="4">
    <source>
        <dbReference type="PDB" id="3PDW"/>
    </source>
</evidence>
<evidence type="ECO:0007829" key="5">
    <source>
        <dbReference type="PDB" id="3PDW"/>
    </source>
</evidence>
<proteinExistence type="evidence at protein level"/>
<feature type="chain" id="PRO_0000389606" description="5'-nucleotidase YutF">
    <location>
        <begin position="1"/>
        <end position="256"/>
    </location>
</feature>
<feature type="strand" evidence="5">
    <location>
        <begin position="5"/>
        <end position="10"/>
    </location>
</feature>
<feature type="strand" evidence="5">
    <location>
        <begin position="12"/>
        <end position="14"/>
    </location>
</feature>
<feature type="helix" evidence="5">
    <location>
        <begin position="18"/>
        <end position="34"/>
    </location>
</feature>
<feature type="strand" evidence="5">
    <location>
        <begin position="39"/>
        <end position="44"/>
    </location>
</feature>
<feature type="helix" evidence="5">
    <location>
        <begin position="50"/>
        <end position="59"/>
    </location>
</feature>
<feature type="helix" evidence="5">
    <location>
        <begin position="66"/>
        <end position="68"/>
    </location>
</feature>
<feature type="strand" evidence="5">
    <location>
        <begin position="69"/>
        <end position="71"/>
    </location>
</feature>
<feature type="helix" evidence="5">
    <location>
        <begin position="72"/>
        <end position="83"/>
    </location>
</feature>
<feature type="strand" evidence="5">
    <location>
        <begin position="88"/>
        <end position="93"/>
    </location>
</feature>
<feature type="helix" evidence="5">
    <location>
        <begin position="95"/>
        <end position="103"/>
    </location>
</feature>
<feature type="strand" evidence="5">
    <location>
        <begin position="114"/>
        <end position="118"/>
    </location>
</feature>
<feature type="helix" evidence="5">
    <location>
        <begin position="126"/>
        <end position="137"/>
    </location>
</feature>
<feature type="strand" evidence="5">
    <location>
        <begin position="141"/>
        <end position="145"/>
    </location>
</feature>
<feature type="strand" evidence="5">
    <location>
        <begin position="150"/>
        <end position="153"/>
    </location>
</feature>
<feature type="strand" evidence="5">
    <location>
        <begin position="156"/>
        <end position="159"/>
    </location>
</feature>
<feature type="helix" evidence="5">
    <location>
        <begin position="161"/>
        <end position="172"/>
    </location>
</feature>
<feature type="helix" evidence="5">
    <location>
        <begin position="185"/>
        <end position="194"/>
    </location>
</feature>
<feature type="helix" evidence="5">
    <location>
        <begin position="198"/>
        <end position="200"/>
    </location>
</feature>
<feature type="strand" evidence="5">
    <location>
        <begin position="201"/>
        <end position="206"/>
    </location>
</feature>
<feature type="turn" evidence="5">
    <location>
        <begin position="208"/>
        <end position="210"/>
    </location>
</feature>
<feature type="helix" evidence="5">
    <location>
        <begin position="211"/>
        <end position="218"/>
    </location>
</feature>
<feature type="strand" evidence="5">
    <location>
        <begin position="221"/>
        <end position="225"/>
    </location>
</feature>
<feature type="strand" evidence="5">
    <location>
        <begin position="243"/>
        <end position="248"/>
    </location>
</feature>
<feature type="helix" evidence="5">
    <location>
        <begin position="249"/>
        <end position="252"/>
    </location>
</feature>
<feature type="helix" evidence="5">
    <location>
        <begin position="253"/>
        <end position="256"/>
    </location>
</feature>
<protein>
    <recommendedName>
        <fullName evidence="2">5'-nucleotidase YutF</fullName>
        <ecNumber evidence="1">3.1.3.5</ecNumber>
    </recommendedName>
</protein>
<name>YUTF_BACSU</name>
<accession>O32125</accession>
<dbReference type="EC" id="3.1.3.5" evidence="1"/>
<dbReference type="EMBL" id="AL009126">
    <property type="protein sequence ID" value="CAB15219.1"/>
    <property type="molecule type" value="Genomic_DNA"/>
</dbReference>
<dbReference type="PIR" id="H70023">
    <property type="entry name" value="H70023"/>
</dbReference>
<dbReference type="PDB" id="3PDW">
    <property type="method" value="X-ray"/>
    <property type="resolution" value="1.60 A"/>
    <property type="chains" value="A=2-256"/>
</dbReference>
<dbReference type="PDBsum" id="3PDW"/>
<dbReference type="SMR" id="O32125"/>
<dbReference type="FunCoup" id="O32125">
    <property type="interactions" value="462"/>
</dbReference>
<dbReference type="STRING" id="224308.BSU32290"/>
<dbReference type="jPOST" id="O32125"/>
<dbReference type="PaxDb" id="224308-BSU32290"/>
<dbReference type="EnsemblBacteria" id="CAB15219">
    <property type="protein sequence ID" value="CAB15219"/>
    <property type="gene ID" value="BSU_32290"/>
</dbReference>
<dbReference type="GeneID" id="936508"/>
<dbReference type="KEGG" id="bsu:BSU32290"/>
<dbReference type="PATRIC" id="fig|224308.179.peg.3496"/>
<dbReference type="eggNOG" id="COG0647">
    <property type="taxonomic scope" value="Bacteria"/>
</dbReference>
<dbReference type="InParanoid" id="O32125"/>
<dbReference type="OrthoDB" id="9810449at2"/>
<dbReference type="PhylomeDB" id="O32125"/>
<dbReference type="BioCyc" id="BSUB:BSU32290-MONOMER"/>
<dbReference type="BRENDA" id="3.1.3.5">
    <property type="organism ID" value="658"/>
</dbReference>
<dbReference type="EvolutionaryTrace" id="O32125"/>
<dbReference type="Proteomes" id="UP000001570">
    <property type="component" value="Chromosome"/>
</dbReference>
<dbReference type="GO" id="GO:0005737">
    <property type="term" value="C:cytoplasm"/>
    <property type="evidence" value="ECO:0000318"/>
    <property type="project" value="GO_Central"/>
</dbReference>
<dbReference type="GO" id="GO:0046872">
    <property type="term" value="F:metal ion binding"/>
    <property type="evidence" value="ECO:0007669"/>
    <property type="project" value="UniProtKB-KW"/>
</dbReference>
<dbReference type="GO" id="GO:0016791">
    <property type="term" value="F:phosphatase activity"/>
    <property type="evidence" value="ECO:0000318"/>
    <property type="project" value="GO_Central"/>
</dbReference>
<dbReference type="GO" id="GO:0106411">
    <property type="term" value="F:XMP 5'-nucleosidase activity"/>
    <property type="evidence" value="ECO:0007669"/>
    <property type="project" value="RHEA"/>
</dbReference>
<dbReference type="CDD" id="cd07530">
    <property type="entry name" value="HAD_Pase_UmpH-like"/>
    <property type="match status" value="1"/>
</dbReference>
<dbReference type="FunFam" id="3.40.50.1000:FF:000053">
    <property type="entry name" value="TIGR01457 family HAD hydrolase"/>
    <property type="match status" value="1"/>
</dbReference>
<dbReference type="Gene3D" id="3.40.50.1000">
    <property type="entry name" value="HAD superfamily/HAD-like"/>
    <property type="match status" value="2"/>
</dbReference>
<dbReference type="InterPro" id="IPR036412">
    <property type="entry name" value="HAD-like_sf"/>
</dbReference>
<dbReference type="InterPro" id="IPR006357">
    <property type="entry name" value="HAD-SF_hydro_IIA"/>
</dbReference>
<dbReference type="InterPro" id="IPR006354">
    <property type="entry name" value="HAD-SF_hydro_IIA_hyp1"/>
</dbReference>
<dbReference type="InterPro" id="IPR023214">
    <property type="entry name" value="HAD_sf"/>
</dbReference>
<dbReference type="NCBIfam" id="TIGR01460">
    <property type="entry name" value="HAD-SF-IIA"/>
    <property type="match status" value="1"/>
</dbReference>
<dbReference type="NCBIfam" id="TIGR01457">
    <property type="entry name" value="HAD-SF-IIA-hyp2"/>
    <property type="match status" value="1"/>
</dbReference>
<dbReference type="PANTHER" id="PTHR19288">
    <property type="entry name" value="4-NITROPHENYLPHOSPHATASE-RELATED"/>
    <property type="match status" value="1"/>
</dbReference>
<dbReference type="PANTHER" id="PTHR19288:SF46">
    <property type="entry name" value="HALOACID DEHALOGENASE-LIKE HYDROLASE DOMAIN-CONTAINING PROTEIN 2"/>
    <property type="match status" value="1"/>
</dbReference>
<dbReference type="Pfam" id="PF13344">
    <property type="entry name" value="Hydrolase_6"/>
    <property type="match status" value="1"/>
</dbReference>
<dbReference type="Pfam" id="PF13242">
    <property type="entry name" value="Hydrolase_like"/>
    <property type="match status" value="1"/>
</dbReference>
<dbReference type="PIRSF" id="PIRSF000915">
    <property type="entry name" value="PGP-type_phosphatase"/>
    <property type="match status" value="1"/>
</dbReference>
<dbReference type="SFLD" id="SFLDG01129">
    <property type="entry name" value="C1.5:_HAD__Beta-PGM__Phosphata"/>
    <property type="match status" value="1"/>
</dbReference>
<dbReference type="SFLD" id="SFLDG01139">
    <property type="entry name" value="C2.A:_Pyridoxal_Phosphate_Phos"/>
    <property type="match status" value="1"/>
</dbReference>
<dbReference type="SFLD" id="SFLDS00003">
    <property type="entry name" value="Haloacid_Dehalogenase"/>
    <property type="match status" value="1"/>
</dbReference>
<dbReference type="SUPFAM" id="SSF56784">
    <property type="entry name" value="HAD-like"/>
    <property type="match status" value="1"/>
</dbReference>